<feature type="chain" id="PRO_0000162078" description="tRNA-dihydrouridine(20/20a) synthase">
    <location>
        <begin position="1"/>
        <end position="326"/>
    </location>
</feature>
<feature type="active site" description="Proton donor" evidence="1">
    <location>
        <position position="93"/>
    </location>
</feature>
<feature type="binding site" evidence="1">
    <location>
        <begin position="11"/>
        <end position="13"/>
    </location>
    <ligand>
        <name>FMN</name>
        <dbReference type="ChEBI" id="CHEBI:58210"/>
    </ligand>
</feature>
<feature type="binding site" evidence="1">
    <location>
        <position position="63"/>
    </location>
    <ligand>
        <name>FMN</name>
        <dbReference type="ChEBI" id="CHEBI:58210"/>
    </ligand>
</feature>
<feature type="binding site" evidence="1">
    <location>
        <position position="132"/>
    </location>
    <ligand>
        <name>FMN</name>
        <dbReference type="ChEBI" id="CHEBI:58210"/>
    </ligand>
</feature>
<feature type="binding site" evidence="1">
    <location>
        <position position="165"/>
    </location>
    <ligand>
        <name>FMN</name>
        <dbReference type="ChEBI" id="CHEBI:58210"/>
    </ligand>
</feature>
<feature type="binding site" evidence="1">
    <location>
        <begin position="205"/>
        <end position="207"/>
    </location>
    <ligand>
        <name>FMN</name>
        <dbReference type="ChEBI" id="CHEBI:58210"/>
    </ligand>
</feature>
<feature type="binding site" evidence="1">
    <location>
        <begin position="227"/>
        <end position="228"/>
    </location>
    <ligand>
        <name>FMN</name>
        <dbReference type="ChEBI" id="CHEBI:58210"/>
    </ligand>
</feature>
<feature type="site" description="Interacts with tRNA" evidence="1">
    <location>
        <position position="90"/>
    </location>
</feature>
<feature type="site" description="Interacts with tRNA; defines subfamily-specific binding signature" evidence="1">
    <location>
        <position position="177"/>
    </location>
</feature>
<feature type="site" description="Interacts with tRNA" evidence="1">
    <location>
        <position position="180"/>
    </location>
</feature>
<feature type="site" description="Interacts with tRNA; defines subfamily-specific binding signature" evidence="1">
    <location>
        <position position="293"/>
    </location>
</feature>
<feature type="site" description="Interacts with tRNA; defines subfamily-specific binding signature" evidence="1">
    <location>
        <position position="296"/>
    </location>
</feature>
<name>DUSA_VIBVU</name>
<accession>Q8CWK7</accession>
<keyword id="KW-0285">Flavoprotein</keyword>
<keyword id="KW-0288">FMN</keyword>
<keyword id="KW-0521">NADP</keyword>
<keyword id="KW-0560">Oxidoreductase</keyword>
<keyword id="KW-0694">RNA-binding</keyword>
<keyword id="KW-0819">tRNA processing</keyword>
<keyword id="KW-0820">tRNA-binding</keyword>
<dbReference type="EC" id="1.3.1.-" evidence="1"/>
<dbReference type="EC" id="1.3.1.91" evidence="1"/>
<dbReference type="EMBL" id="AE016795">
    <property type="protein sequence ID" value="AAO09847.2"/>
    <property type="molecule type" value="Genomic_DNA"/>
</dbReference>
<dbReference type="RefSeq" id="WP_011079372.1">
    <property type="nucleotide sequence ID" value="NC_004459.3"/>
</dbReference>
<dbReference type="SMR" id="Q8CWK7"/>
<dbReference type="KEGG" id="vvu:VV1_1398"/>
<dbReference type="HOGENOM" id="CLU_013299_2_1_6"/>
<dbReference type="Proteomes" id="UP000002275">
    <property type="component" value="Chromosome 1"/>
</dbReference>
<dbReference type="GO" id="GO:0050660">
    <property type="term" value="F:flavin adenine dinucleotide binding"/>
    <property type="evidence" value="ECO:0007669"/>
    <property type="project" value="InterPro"/>
</dbReference>
<dbReference type="GO" id="GO:0010181">
    <property type="term" value="F:FMN binding"/>
    <property type="evidence" value="ECO:0007669"/>
    <property type="project" value="UniProtKB-UniRule"/>
</dbReference>
<dbReference type="GO" id="GO:0000049">
    <property type="term" value="F:tRNA binding"/>
    <property type="evidence" value="ECO:0007669"/>
    <property type="project" value="UniProtKB-UniRule"/>
</dbReference>
<dbReference type="GO" id="GO:0102264">
    <property type="term" value="F:tRNA-dihydrouridine20 synthase activity"/>
    <property type="evidence" value="ECO:0007669"/>
    <property type="project" value="UniProtKB-EC"/>
</dbReference>
<dbReference type="GO" id="GO:0102266">
    <property type="term" value="F:tRNA-dihydrouridine20a synthase activity"/>
    <property type="evidence" value="ECO:0007669"/>
    <property type="project" value="RHEA"/>
</dbReference>
<dbReference type="CDD" id="cd02801">
    <property type="entry name" value="DUS_like_FMN"/>
    <property type="match status" value="1"/>
</dbReference>
<dbReference type="FunFam" id="1.20.120.1460:FF:000001">
    <property type="entry name" value="tRNA-dihydrouridine(20/20a) synthase"/>
    <property type="match status" value="1"/>
</dbReference>
<dbReference type="FunFam" id="3.20.20.70:FF:000083">
    <property type="entry name" value="tRNA-dihydrouridine(20/20a) synthase"/>
    <property type="match status" value="1"/>
</dbReference>
<dbReference type="Gene3D" id="1.20.120.1460">
    <property type="match status" value="1"/>
</dbReference>
<dbReference type="Gene3D" id="3.20.20.70">
    <property type="entry name" value="Aldolase class I"/>
    <property type="match status" value="1"/>
</dbReference>
<dbReference type="HAMAP" id="MF_02041">
    <property type="entry name" value="DusA_subfam"/>
    <property type="match status" value="1"/>
</dbReference>
<dbReference type="InterPro" id="IPR013785">
    <property type="entry name" value="Aldolase_TIM"/>
</dbReference>
<dbReference type="InterPro" id="IPR035587">
    <property type="entry name" value="DUS-like_FMN-bd"/>
</dbReference>
<dbReference type="InterPro" id="IPR001269">
    <property type="entry name" value="DUS_fam"/>
</dbReference>
<dbReference type="InterPro" id="IPR004653">
    <property type="entry name" value="DusA"/>
</dbReference>
<dbReference type="InterPro" id="IPR018517">
    <property type="entry name" value="tRNA_hU_synthase_CS"/>
</dbReference>
<dbReference type="NCBIfam" id="NF008774">
    <property type="entry name" value="PRK11815.1"/>
    <property type="match status" value="1"/>
</dbReference>
<dbReference type="NCBIfam" id="TIGR00742">
    <property type="entry name" value="yjbN"/>
    <property type="match status" value="1"/>
</dbReference>
<dbReference type="PANTHER" id="PTHR42907">
    <property type="entry name" value="FMN-LINKED OXIDOREDUCTASES SUPERFAMILY PROTEIN"/>
    <property type="match status" value="1"/>
</dbReference>
<dbReference type="PANTHER" id="PTHR42907:SF1">
    <property type="entry name" value="FMN-LINKED OXIDOREDUCTASES SUPERFAMILY PROTEIN"/>
    <property type="match status" value="1"/>
</dbReference>
<dbReference type="Pfam" id="PF01207">
    <property type="entry name" value="Dus"/>
    <property type="match status" value="1"/>
</dbReference>
<dbReference type="PIRSF" id="PIRSF006621">
    <property type="entry name" value="Dus"/>
    <property type="match status" value="1"/>
</dbReference>
<dbReference type="SUPFAM" id="SSF51395">
    <property type="entry name" value="FMN-linked oxidoreductases"/>
    <property type="match status" value="1"/>
</dbReference>
<dbReference type="PROSITE" id="PS01136">
    <property type="entry name" value="UPF0034"/>
    <property type="match status" value="1"/>
</dbReference>
<reference key="1">
    <citation type="submission" date="2002-12" db="EMBL/GenBank/DDBJ databases">
        <title>Complete genome sequence of Vibrio vulnificus CMCP6.</title>
        <authorList>
            <person name="Rhee J.H."/>
            <person name="Kim S.Y."/>
            <person name="Chung S.S."/>
            <person name="Kim J.J."/>
            <person name="Moon Y.H."/>
            <person name="Jeong H."/>
            <person name="Choy H.E."/>
        </authorList>
    </citation>
    <scope>NUCLEOTIDE SEQUENCE [LARGE SCALE GENOMIC DNA]</scope>
    <source>
        <strain>CMCP6</strain>
    </source>
</reference>
<gene>
    <name evidence="1" type="primary">dusA</name>
    <name type="ordered locus">VV1_1398</name>
</gene>
<proteinExistence type="inferred from homology"/>
<sequence length="326" mass="36637">MTHSCRLSVAPMLDWTDRHCRYFHRLMTKETLLYTEMITTGAIIHGKGDFLAYNQEEHPVALQLGGSNPQDLATCAKLAAERGYDEVNLNVGCPSDRVQNGRFGACLMAEPQLVADCVAAMKEVVDIPVTVKTRIGIDDQDSYEFLTDFVSIVSEKGGCEQFTIHARKAWLSGLSPKENREIPPLDYPRAYQLKKDFSHLTIAINGGVKSLEEAKEHLQHLDGVMIGREAYQSPYLLASVDQELFGSQSPIKKRRQIVEEMYPYIEQQLANGAYLGHMTRHMLGLFQNMPGARQWRRHISENAHKPGSGIEVLQQALAKIPQELDV</sequence>
<protein>
    <recommendedName>
        <fullName evidence="1">tRNA-dihydrouridine(20/20a) synthase</fullName>
        <ecNumber evidence="1">1.3.1.-</ecNumber>
        <ecNumber evidence="1">1.3.1.91</ecNumber>
    </recommendedName>
    <alternativeName>
        <fullName evidence="1">U20-specific dihydrouridine synthase</fullName>
        <shortName evidence="1">U20-specific Dus</shortName>
    </alternativeName>
    <alternativeName>
        <fullName evidence="1">tRNA-dihydrouridine synthase A</fullName>
    </alternativeName>
</protein>
<organism>
    <name type="scientific">Vibrio vulnificus (strain CMCP6)</name>
    <dbReference type="NCBI Taxonomy" id="216895"/>
    <lineage>
        <taxon>Bacteria</taxon>
        <taxon>Pseudomonadati</taxon>
        <taxon>Pseudomonadota</taxon>
        <taxon>Gammaproteobacteria</taxon>
        <taxon>Vibrionales</taxon>
        <taxon>Vibrionaceae</taxon>
        <taxon>Vibrio</taxon>
    </lineage>
</organism>
<comment type="function">
    <text evidence="1">Catalyzes the synthesis of 5,6-dihydrouridine (D), a modified base found in the D-loop of most tRNAs, via the reduction of the C5-C6 double bond in target uridines. Specifically modifies U20 and U20a in tRNAs.</text>
</comment>
<comment type="catalytic activity">
    <reaction evidence="1">
        <text>5,6-dihydrouridine(20) in tRNA + NADP(+) = uridine(20) in tRNA + NADPH + H(+)</text>
        <dbReference type="Rhea" id="RHEA:53336"/>
        <dbReference type="Rhea" id="RHEA-COMP:13533"/>
        <dbReference type="Rhea" id="RHEA-COMP:13534"/>
        <dbReference type="ChEBI" id="CHEBI:15378"/>
        <dbReference type="ChEBI" id="CHEBI:57783"/>
        <dbReference type="ChEBI" id="CHEBI:58349"/>
        <dbReference type="ChEBI" id="CHEBI:65315"/>
        <dbReference type="ChEBI" id="CHEBI:74443"/>
        <dbReference type="EC" id="1.3.1.91"/>
    </reaction>
</comment>
<comment type="catalytic activity">
    <reaction evidence="1">
        <text>5,6-dihydrouridine(20) in tRNA + NAD(+) = uridine(20) in tRNA + NADH + H(+)</text>
        <dbReference type="Rhea" id="RHEA:53340"/>
        <dbReference type="Rhea" id="RHEA-COMP:13533"/>
        <dbReference type="Rhea" id="RHEA-COMP:13534"/>
        <dbReference type="ChEBI" id="CHEBI:15378"/>
        <dbReference type="ChEBI" id="CHEBI:57540"/>
        <dbReference type="ChEBI" id="CHEBI:57945"/>
        <dbReference type="ChEBI" id="CHEBI:65315"/>
        <dbReference type="ChEBI" id="CHEBI:74443"/>
        <dbReference type="EC" id="1.3.1.91"/>
    </reaction>
</comment>
<comment type="catalytic activity">
    <reaction evidence="1">
        <text>5,6-dihydrouridine(20a) in tRNA + NADP(+) = uridine(20a) in tRNA + NADPH + H(+)</text>
        <dbReference type="Rhea" id="RHEA:53344"/>
        <dbReference type="Rhea" id="RHEA-COMP:13535"/>
        <dbReference type="Rhea" id="RHEA-COMP:13536"/>
        <dbReference type="ChEBI" id="CHEBI:15378"/>
        <dbReference type="ChEBI" id="CHEBI:57783"/>
        <dbReference type="ChEBI" id="CHEBI:58349"/>
        <dbReference type="ChEBI" id="CHEBI:65315"/>
        <dbReference type="ChEBI" id="CHEBI:74443"/>
    </reaction>
</comment>
<comment type="catalytic activity">
    <reaction evidence="1">
        <text>5,6-dihydrouridine(20a) in tRNA + NAD(+) = uridine(20a) in tRNA + NADH + H(+)</text>
        <dbReference type="Rhea" id="RHEA:53348"/>
        <dbReference type="Rhea" id="RHEA-COMP:13535"/>
        <dbReference type="Rhea" id="RHEA-COMP:13536"/>
        <dbReference type="ChEBI" id="CHEBI:15378"/>
        <dbReference type="ChEBI" id="CHEBI:57540"/>
        <dbReference type="ChEBI" id="CHEBI:57945"/>
        <dbReference type="ChEBI" id="CHEBI:65315"/>
        <dbReference type="ChEBI" id="CHEBI:74443"/>
    </reaction>
</comment>
<comment type="cofactor">
    <cofactor evidence="1">
        <name>FMN</name>
        <dbReference type="ChEBI" id="CHEBI:58210"/>
    </cofactor>
</comment>
<comment type="similarity">
    <text evidence="1">Belongs to the Dus family. DusA subfamily.</text>
</comment>
<evidence type="ECO:0000255" key="1">
    <source>
        <dbReference type="HAMAP-Rule" id="MF_02041"/>
    </source>
</evidence>